<name>MIAB_PELUB</name>
<accession>Q4FNN5</accession>
<reference key="1">
    <citation type="journal article" date="2005" name="Science">
        <title>Genome streamlining in a cosmopolitan oceanic bacterium.</title>
        <authorList>
            <person name="Giovannoni S.J."/>
            <person name="Tripp H.J."/>
            <person name="Givan S."/>
            <person name="Podar M."/>
            <person name="Vergin K.L."/>
            <person name="Baptista D."/>
            <person name="Bibbs L."/>
            <person name="Eads J."/>
            <person name="Richardson T.H."/>
            <person name="Noordewier M."/>
            <person name="Rappe M.S."/>
            <person name="Short J.M."/>
            <person name="Carrington J.C."/>
            <person name="Mathur E.J."/>
        </authorList>
    </citation>
    <scope>NUCLEOTIDE SEQUENCE [LARGE SCALE GENOMIC DNA]</scope>
    <source>
        <strain>HTCC1062</strain>
    </source>
</reference>
<comment type="function">
    <text evidence="1">Catalyzes the methylthiolation of N6-(dimethylallyl)adenosine (i(6)A), leading to the formation of 2-methylthio-N6-(dimethylallyl)adenosine (ms(2)i(6)A) at position 37 in tRNAs that read codons beginning with uridine.</text>
</comment>
<comment type="catalytic activity">
    <reaction evidence="1">
        <text>N(6)-dimethylallyladenosine(37) in tRNA + (sulfur carrier)-SH + AH2 + 2 S-adenosyl-L-methionine = 2-methylsulfanyl-N(6)-dimethylallyladenosine(37) in tRNA + (sulfur carrier)-H + 5'-deoxyadenosine + L-methionine + A + S-adenosyl-L-homocysteine + 2 H(+)</text>
        <dbReference type="Rhea" id="RHEA:37067"/>
        <dbReference type="Rhea" id="RHEA-COMP:10375"/>
        <dbReference type="Rhea" id="RHEA-COMP:10376"/>
        <dbReference type="Rhea" id="RHEA-COMP:14737"/>
        <dbReference type="Rhea" id="RHEA-COMP:14739"/>
        <dbReference type="ChEBI" id="CHEBI:13193"/>
        <dbReference type="ChEBI" id="CHEBI:15378"/>
        <dbReference type="ChEBI" id="CHEBI:17319"/>
        <dbReference type="ChEBI" id="CHEBI:17499"/>
        <dbReference type="ChEBI" id="CHEBI:29917"/>
        <dbReference type="ChEBI" id="CHEBI:57844"/>
        <dbReference type="ChEBI" id="CHEBI:57856"/>
        <dbReference type="ChEBI" id="CHEBI:59789"/>
        <dbReference type="ChEBI" id="CHEBI:64428"/>
        <dbReference type="ChEBI" id="CHEBI:74415"/>
        <dbReference type="ChEBI" id="CHEBI:74417"/>
        <dbReference type="EC" id="2.8.4.3"/>
    </reaction>
</comment>
<comment type="cofactor">
    <cofactor evidence="1">
        <name>[4Fe-4S] cluster</name>
        <dbReference type="ChEBI" id="CHEBI:49883"/>
    </cofactor>
    <text evidence="1">Binds 2 [4Fe-4S] clusters. One cluster is coordinated with 3 cysteines and an exchangeable S-adenosyl-L-methionine.</text>
</comment>
<comment type="subunit">
    <text evidence="1">Monomer.</text>
</comment>
<comment type="subcellular location">
    <subcellularLocation>
        <location evidence="1">Cytoplasm</location>
    </subcellularLocation>
</comment>
<comment type="similarity">
    <text evidence="1">Belongs to the methylthiotransferase family. MiaB subfamily.</text>
</comment>
<feature type="chain" id="PRO_0000374427" description="tRNA-2-methylthio-N(6)-dimethylallyladenosine synthase">
    <location>
        <begin position="1"/>
        <end position="446"/>
    </location>
</feature>
<feature type="domain" description="MTTase N-terminal" evidence="1">
    <location>
        <begin position="3"/>
        <end position="119"/>
    </location>
</feature>
<feature type="domain" description="Radical SAM core" evidence="2">
    <location>
        <begin position="144"/>
        <end position="374"/>
    </location>
</feature>
<feature type="domain" description="TRAM" evidence="1">
    <location>
        <begin position="377"/>
        <end position="439"/>
    </location>
</feature>
<feature type="binding site" evidence="1">
    <location>
        <position position="12"/>
    </location>
    <ligand>
        <name>[4Fe-4S] cluster</name>
        <dbReference type="ChEBI" id="CHEBI:49883"/>
        <label>1</label>
    </ligand>
</feature>
<feature type="binding site" evidence="1">
    <location>
        <position position="48"/>
    </location>
    <ligand>
        <name>[4Fe-4S] cluster</name>
        <dbReference type="ChEBI" id="CHEBI:49883"/>
        <label>1</label>
    </ligand>
</feature>
<feature type="binding site" evidence="1">
    <location>
        <position position="82"/>
    </location>
    <ligand>
        <name>[4Fe-4S] cluster</name>
        <dbReference type="ChEBI" id="CHEBI:49883"/>
        <label>1</label>
    </ligand>
</feature>
<feature type="binding site" evidence="1">
    <location>
        <position position="158"/>
    </location>
    <ligand>
        <name>[4Fe-4S] cluster</name>
        <dbReference type="ChEBI" id="CHEBI:49883"/>
        <label>2</label>
        <note>4Fe-4S-S-AdoMet</note>
    </ligand>
</feature>
<feature type="binding site" evidence="1">
    <location>
        <position position="162"/>
    </location>
    <ligand>
        <name>[4Fe-4S] cluster</name>
        <dbReference type="ChEBI" id="CHEBI:49883"/>
        <label>2</label>
        <note>4Fe-4S-S-AdoMet</note>
    </ligand>
</feature>
<feature type="binding site" evidence="1">
    <location>
        <position position="165"/>
    </location>
    <ligand>
        <name>[4Fe-4S] cluster</name>
        <dbReference type="ChEBI" id="CHEBI:49883"/>
        <label>2</label>
        <note>4Fe-4S-S-AdoMet</note>
    </ligand>
</feature>
<organism>
    <name type="scientific">Pelagibacter ubique (strain HTCC1062)</name>
    <dbReference type="NCBI Taxonomy" id="335992"/>
    <lineage>
        <taxon>Bacteria</taxon>
        <taxon>Pseudomonadati</taxon>
        <taxon>Pseudomonadota</taxon>
        <taxon>Alphaproteobacteria</taxon>
        <taxon>Candidatus Pelagibacterales</taxon>
        <taxon>Candidatus Pelagibacteraceae</taxon>
        <taxon>Candidatus Pelagibacter</taxon>
    </lineage>
</organism>
<gene>
    <name evidence="1" type="primary">miaB</name>
    <name type="ordered locus">SAR11_0383</name>
</gene>
<evidence type="ECO:0000255" key="1">
    <source>
        <dbReference type="HAMAP-Rule" id="MF_01864"/>
    </source>
</evidence>
<evidence type="ECO:0000255" key="2">
    <source>
        <dbReference type="PROSITE-ProRule" id="PRU01266"/>
    </source>
</evidence>
<sequence>MLKKIFIKTFGCQMNEYDSNRIFDTVKKIGFEKTEKYEDANCYLLNTCHIRDKAKEKVYHEIGRVKKIFREKKKPIVVVAGCVAQAENQEMLKREPYIDIVIGPQSYHKINEAILNHLKNKKKEEETEFDTISKFNYLSQIKNKDSKVSSFLTIQEGCDKFCHFCVVPYTRGPEYSRPFDQIINEAKELVQSGAKEIILLGQNVNAYSYDEEGKKYRLSDLLIKLDSFDKLERIRYTTSHPKDMTDDLINVYKTSSKLMPLVHLPVQSGSNKILNLMNRKHTIEEYLLVYEKLRKINPKIEFSSDFIIGYPEEDEQDFKMTMELIEKVKFINSYSFIFSPRPGTVAANLTLVDQKKSKQRLEIIQEKLFNNQIKKNKSLENKILNVLVENKMKDGIKLFGRTEYMTSVIFDGNIENIGKLVQVEIISSNQNSLFGKLTESSKKKVA</sequence>
<proteinExistence type="inferred from homology"/>
<keyword id="KW-0004">4Fe-4S</keyword>
<keyword id="KW-0963">Cytoplasm</keyword>
<keyword id="KW-0408">Iron</keyword>
<keyword id="KW-0411">Iron-sulfur</keyword>
<keyword id="KW-0479">Metal-binding</keyword>
<keyword id="KW-1185">Reference proteome</keyword>
<keyword id="KW-0949">S-adenosyl-L-methionine</keyword>
<keyword id="KW-0808">Transferase</keyword>
<keyword id="KW-0819">tRNA processing</keyword>
<protein>
    <recommendedName>
        <fullName evidence="1">tRNA-2-methylthio-N(6)-dimethylallyladenosine synthase</fullName>
        <ecNumber evidence="1">2.8.4.3</ecNumber>
    </recommendedName>
    <alternativeName>
        <fullName evidence="1">(Dimethylallyl)adenosine tRNA methylthiotransferase MiaB</fullName>
    </alternativeName>
    <alternativeName>
        <fullName evidence="1">tRNA-i(6)A37 methylthiotransferase</fullName>
    </alternativeName>
</protein>
<dbReference type="EC" id="2.8.4.3" evidence="1"/>
<dbReference type="EMBL" id="CP000084">
    <property type="protein sequence ID" value="AAZ21204.1"/>
    <property type="molecule type" value="Genomic_DNA"/>
</dbReference>
<dbReference type="SMR" id="Q4FNN5"/>
<dbReference type="STRING" id="335992.SAR11_0383"/>
<dbReference type="KEGG" id="pub:SAR11_0383"/>
<dbReference type="eggNOG" id="COG0621">
    <property type="taxonomic scope" value="Bacteria"/>
</dbReference>
<dbReference type="HOGENOM" id="CLU_018697_2_0_5"/>
<dbReference type="Proteomes" id="UP000002528">
    <property type="component" value="Chromosome"/>
</dbReference>
<dbReference type="GO" id="GO:0005829">
    <property type="term" value="C:cytosol"/>
    <property type="evidence" value="ECO:0007669"/>
    <property type="project" value="TreeGrafter"/>
</dbReference>
<dbReference type="GO" id="GO:0051539">
    <property type="term" value="F:4 iron, 4 sulfur cluster binding"/>
    <property type="evidence" value="ECO:0007669"/>
    <property type="project" value="UniProtKB-UniRule"/>
</dbReference>
<dbReference type="GO" id="GO:0046872">
    <property type="term" value="F:metal ion binding"/>
    <property type="evidence" value="ECO:0007669"/>
    <property type="project" value="UniProtKB-KW"/>
</dbReference>
<dbReference type="GO" id="GO:0035597">
    <property type="term" value="F:N6-isopentenyladenosine methylthiotransferase activity"/>
    <property type="evidence" value="ECO:0007669"/>
    <property type="project" value="TreeGrafter"/>
</dbReference>
<dbReference type="CDD" id="cd01335">
    <property type="entry name" value="Radical_SAM"/>
    <property type="match status" value="1"/>
</dbReference>
<dbReference type="FunFam" id="3.40.50.12160:FF:000003">
    <property type="entry name" value="CDK5 regulatory subunit-associated protein 1"/>
    <property type="match status" value="1"/>
</dbReference>
<dbReference type="FunFam" id="3.80.30.20:FF:000001">
    <property type="entry name" value="tRNA-2-methylthio-N(6)-dimethylallyladenosine synthase 2"/>
    <property type="match status" value="1"/>
</dbReference>
<dbReference type="Gene3D" id="3.40.50.12160">
    <property type="entry name" value="Methylthiotransferase, N-terminal domain"/>
    <property type="match status" value="1"/>
</dbReference>
<dbReference type="Gene3D" id="3.80.30.20">
    <property type="entry name" value="tm_1862 like domain"/>
    <property type="match status" value="1"/>
</dbReference>
<dbReference type="HAMAP" id="MF_01864">
    <property type="entry name" value="tRNA_metthiotr_MiaB"/>
    <property type="match status" value="1"/>
</dbReference>
<dbReference type="InterPro" id="IPR006638">
    <property type="entry name" value="Elp3/MiaA/NifB-like_rSAM"/>
</dbReference>
<dbReference type="InterPro" id="IPR005839">
    <property type="entry name" value="Methylthiotransferase"/>
</dbReference>
<dbReference type="InterPro" id="IPR013848">
    <property type="entry name" value="Methylthiotransferase_N"/>
</dbReference>
<dbReference type="InterPro" id="IPR038135">
    <property type="entry name" value="Methylthiotransferase_N_sf"/>
</dbReference>
<dbReference type="InterPro" id="IPR006463">
    <property type="entry name" value="MiaB_methiolase"/>
</dbReference>
<dbReference type="InterPro" id="IPR007197">
    <property type="entry name" value="rSAM"/>
</dbReference>
<dbReference type="InterPro" id="IPR023404">
    <property type="entry name" value="rSAM_horseshoe"/>
</dbReference>
<dbReference type="InterPro" id="IPR002792">
    <property type="entry name" value="TRAM_dom"/>
</dbReference>
<dbReference type="NCBIfam" id="TIGR01574">
    <property type="entry name" value="miaB-methiolase"/>
    <property type="match status" value="1"/>
</dbReference>
<dbReference type="NCBIfam" id="TIGR00089">
    <property type="entry name" value="MiaB/RimO family radical SAM methylthiotransferase"/>
    <property type="match status" value="1"/>
</dbReference>
<dbReference type="PANTHER" id="PTHR43020">
    <property type="entry name" value="CDK5 REGULATORY SUBUNIT-ASSOCIATED PROTEIN 1"/>
    <property type="match status" value="1"/>
</dbReference>
<dbReference type="PANTHER" id="PTHR43020:SF2">
    <property type="entry name" value="MITOCHONDRIAL TRNA METHYLTHIOTRANSFERASE CDK5RAP1"/>
    <property type="match status" value="1"/>
</dbReference>
<dbReference type="Pfam" id="PF04055">
    <property type="entry name" value="Radical_SAM"/>
    <property type="match status" value="1"/>
</dbReference>
<dbReference type="Pfam" id="PF01938">
    <property type="entry name" value="TRAM"/>
    <property type="match status" value="1"/>
</dbReference>
<dbReference type="Pfam" id="PF00919">
    <property type="entry name" value="UPF0004"/>
    <property type="match status" value="1"/>
</dbReference>
<dbReference type="SFLD" id="SFLDF00273">
    <property type="entry name" value="(dimethylallyl)adenosine_tRNA"/>
    <property type="match status" value="1"/>
</dbReference>
<dbReference type="SFLD" id="SFLDG01082">
    <property type="entry name" value="B12-binding_domain_containing"/>
    <property type="match status" value="1"/>
</dbReference>
<dbReference type="SFLD" id="SFLDG01061">
    <property type="entry name" value="methylthiotransferase"/>
    <property type="match status" value="1"/>
</dbReference>
<dbReference type="SMART" id="SM00729">
    <property type="entry name" value="Elp3"/>
    <property type="match status" value="1"/>
</dbReference>
<dbReference type="SUPFAM" id="SSF102114">
    <property type="entry name" value="Radical SAM enzymes"/>
    <property type="match status" value="1"/>
</dbReference>
<dbReference type="PROSITE" id="PS51449">
    <property type="entry name" value="MTTASE_N"/>
    <property type="match status" value="1"/>
</dbReference>
<dbReference type="PROSITE" id="PS51918">
    <property type="entry name" value="RADICAL_SAM"/>
    <property type="match status" value="1"/>
</dbReference>
<dbReference type="PROSITE" id="PS50926">
    <property type="entry name" value="TRAM"/>
    <property type="match status" value="1"/>
</dbReference>